<sequence length="192" mass="21641">METHDLTLDDFLSRFQLLRPKMSRDVLNRRQAAVLIPLVRREQPGLLLTKRASHMRKHPGQVAFPGGAVDSTDASLIAAALREAHEEVAIPPEVVEIIGVLPPVDSVTGFQVTPVVGIIPPDLHYHASEEEVAAVFEMPLSEALRLSRYHPLDIQRRGHDHRVWLSWYQHYFVWGMTAGIIRELALQIGMKP</sequence>
<evidence type="ECO:0000255" key="1">
    <source>
        <dbReference type="HAMAP-Rule" id="MF_01592"/>
    </source>
</evidence>
<comment type="function">
    <text evidence="1">Probably mediates the hydrolysis of some nucleoside diphosphate derivatives.</text>
</comment>
<comment type="cofactor">
    <cofactor evidence="1">
        <name>Mn(2+)</name>
        <dbReference type="ChEBI" id="CHEBI:29035"/>
    </cofactor>
    <cofactor evidence="1">
        <name>Mg(2+)</name>
        <dbReference type="ChEBI" id="CHEBI:18420"/>
    </cofactor>
</comment>
<comment type="similarity">
    <text evidence="1">Belongs to the Nudix hydrolase family. PCD1 subfamily.</text>
</comment>
<proteinExistence type="inferred from homology"/>
<organism>
    <name type="scientific">Enterobacter sp. (strain 638)</name>
    <dbReference type="NCBI Taxonomy" id="399742"/>
    <lineage>
        <taxon>Bacteria</taxon>
        <taxon>Pseudomonadati</taxon>
        <taxon>Pseudomonadota</taxon>
        <taxon>Gammaproteobacteria</taxon>
        <taxon>Enterobacterales</taxon>
        <taxon>Enterobacteriaceae</taxon>
        <taxon>Enterobacter</taxon>
    </lineage>
</organism>
<name>NUDL_ENT38</name>
<keyword id="KW-0378">Hydrolase</keyword>
<keyword id="KW-0460">Magnesium</keyword>
<keyword id="KW-0464">Manganese</keyword>
<keyword id="KW-0479">Metal-binding</keyword>
<accession>A4WBH1</accession>
<dbReference type="EC" id="3.6.1.-" evidence="1"/>
<dbReference type="EMBL" id="CP000653">
    <property type="protein sequence ID" value="ABP61051.1"/>
    <property type="molecule type" value="Genomic_DNA"/>
</dbReference>
<dbReference type="RefSeq" id="WP_012017764.1">
    <property type="nucleotide sequence ID" value="NC_009436.1"/>
</dbReference>
<dbReference type="SMR" id="A4WBH1"/>
<dbReference type="STRING" id="399742.Ent638_2382"/>
<dbReference type="KEGG" id="ent:Ent638_2382"/>
<dbReference type="eggNOG" id="COG0494">
    <property type="taxonomic scope" value="Bacteria"/>
</dbReference>
<dbReference type="HOGENOM" id="CLU_040940_5_2_6"/>
<dbReference type="OrthoDB" id="9802805at2"/>
<dbReference type="Proteomes" id="UP000000230">
    <property type="component" value="Chromosome"/>
</dbReference>
<dbReference type="GO" id="GO:0010945">
    <property type="term" value="F:coenzyme A diphosphatase activity"/>
    <property type="evidence" value="ECO:0007669"/>
    <property type="project" value="InterPro"/>
</dbReference>
<dbReference type="GO" id="GO:0000287">
    <property type="term" value="F:magnesium ion binding"/>
    <property type="evidence" value="ECO:0007669"/>
    <property type="project" value="UniProtKB-UniRule"/>
</dbReference>
<dbReference type="GO" id="GO:0030145">
    <property type="term" value="F:manganese ion binding"/>
    <property type="evidence" value="ECO:0007669"/>
    <property type="project" value="UniProtKB-UniRule"/>
</dbReference>
<dbReference type="GO" id="GO:0009132">
    <property type="term" value="P:nucleoside diphosphate metabolic process"/>
    <property type="evidence" value="ECO:0007669"/>
    <property type="project" value="InterPro"/>
</dbReference>
<dbReference type="CDD" id="cd03426">
    <property type="entry name" value="NUDIX_CoAse_Nudt7"/>
    <property type="match status" value="1"/>
</dbReference>
<dbReference type="Gene3D" id="3.90.79.10">
    <property type="entry name" value="Nucleoside Triphosphate Pyrophosphohydrolase"/>
    <property type="match status" value="1"/>
</dbReference>
<dbReference type="HAMAP" id="MF_01592">
    <property type="entry name" value="Nudix_NudL"/>
    <property type="match status" value="1"/>
</dbReference>
<dbReference type="InterPro" id="IPR045121">
    <property type="entry name" value="CoAse"/>
</dbReference>
<dbReference type="InterPro" id="IPR015797">
    <property type="entry name" value="NUDIX_hydrolase-like_dom_sf"/>
</dbReference>
<dbReference type="InterPro" id="IPR000086">
    <property type="entry name" value="NUDIX_hydrolase_dom"/>
</dbReference>
<dbReference type="InterPro" id="IPR000059">
    <property type="entry name" value="NUDIX_hydrolase_NudL_CS"/>
</dbReference>
<dbReference type="InterPro" id="IPR023735">
    <property type="entry name" value="Nudix_NudL"/>
</dbReference>
<dbReference type="NCBIfam" id="NF007980">
    <property type="entry name" value="PRK10707.1"/>
    <property type="match status" value="1"/>
</dbReference>
<dbReference type="PANTHER" id="PTHR12992:SF11">
    <property type="entry name" value="MITOCHONDRIAL COENZYME A DIPHOSPHATASE NUDT8"/>
    <property type="match status" value="1"/>
</dbReference>
<dbReference type="PANTHER" id="PTHR12992">
    <property type="entry name" value="NUDIX HYDROLASE"/>
    <property type="match status" value="1"/>
</dbReference>
<dbReference type="Pfam" id="PF00293">
    <property type="entry name" value="NUDIX"/>
    <property type="match status" value="1"/>
</dbReference>
<dbReference type="SUPFAM" id="SSF55811">
    <property type="entry name" value="Nudix"/>
    <property type="match status" value="1"/>
</dbReference>
<dbReference type="PROSITE" id="PS51462">
    <property type="entry name" value="NUDIX"/>
    <property type="match status" value="1"/>
</dbReference>
<dbReference type="PROSITE" id="PS01293">
    <property type="entry name" value="NUDIX_COA"/>
    <property type="match status" value="1"/>
</dbReference>
<gene>
    <name evidence="1" type="primary">nudL</name>
    <name type="ordered locus">Ent638_2382</name>
</gene>
<feature type="chain" id="PRO_0000315570" description="Uncharacterized Nudix hydrolase NudL">
    <location>
        <begin position="1"/>
        <end position="192"/>
    </location>
</feature>
<feature type="domain" description="Nudix hydrolase" evidence="1">
    <location>
        <begin position="29"/>
        <end position="160"/>
    </location>
</feature>
<feature type="short sequence motif" description="Nudix box">
    <location>
        <begin position="67"/>
        <end position="89"/>
    </location>
</feature>
<feature type="binding site" evidence="1">
    <location>
        <position position="83"/>
    </location>
    <ligand>
        <name>Mg(2+)</name>
        <dbReference type="ChEBI" id="CHEBI:18420"/>
    </ligand>
</feature>
<feature type="binding site" evidence="1">
    <location>
        <position position="87"/>
    </location>
    <ligand>
        <name>Mg(2+)</name>
        <dbReference type="ChEBI" id="CHEBI:18420"/>
    </ligand>
</feature>
<protein>
    <recommendedName>
        <fullName evidence="1">Uncharacterized Nudix hydrolase NudL</fullName>
        <ecNumber evidence="1">3.6.1.-</ecNumber>
    </recommendedName>
</protein>
<reference key="1">
    <citation type="journal article" date="2010" name="PLoS Genet.">
        <title>Genome sequence of the plant growth promoting endophytic bacterium Enterobacter sp. 638.</title>
        <authorList>
            <person name="Taghavi S."/>
            <person name="van der Lelie D."/>
            <person name="Hoffman A."/>
            <person name="Zhang Y.B."/>
            <person name="Walla M.D."/>
            <person name="Vangronsveld J."/>
            <person name="Newman L."/>
            <person name="Monchy S."/>
        </authorList>
    </citation>
    <scope>NUCLEOTIDE SEQUENCE [LARGE SCALE GENOMIC DNA]</scope>
    <source>
        <strain>638</strain>
    </source>
</reference>